<sequence>MAFLPRYYPENIEYLKISKENTPLKEWYIPMTCFCDIPLHQMSYHAEGKAQTGYGKFSIALHKKFGINNGIQPVQYLNSNSIPTEELRNAISILLSDNGQIYSDEALISLSNHLFEYMRRIKPLDGSMKKWDKEGKKYVEIKKNFHDEHEWRYIPDFESDELPFLLYRQDDIIAESSSQFYTKSITETKNGLLNFSVSDIRYIFVDSILSREKLISFIKRKQKGKRIPRAEKDILISKILVYDEIKEDW</sequence>
<dbReference type="EMBL" id="U60336">
    <property type="protein sequence ID" value="AAB38312.1"/>
    <property type="molecule type" value="Genomic_DNA"/>
</dbReference>
<dbReference type="InterPro" id="IPR021223">
    <property type="entry name" value="AbiGi"/>
</dbReference>
<dbReference type="InterPro" id="IPR053695">
    <property type="entry name" value="AbiGi-like"/>
</dbReference>
<dbReference type="NCBIfam" id="NF042957">
    <property type="entry name" value="phage_res_AbiGI"/>
    <property type="match status" value="1"/>
</dbReference>
<dbReference type="Pfam" id="PF10899">
    <property type="entry name" value="AbiGi"/>
    <property type="match status" value="1"/>
</dbReference>
<accession>Q48725</accession>
<organism>
    <name type="scientific">Lactococcus lactis subsp. cremoris</name>
    <name type="common">Streptococcus cremoris</name>
    <dbReference type="NCBI Taxonomy" id="1359"/>
    <lineage>
        <taxon>Bacteria</taxon>
        <taxon>Bacillati</taxon>
        <taxon>Bacillota</taxon>
        <taxon>Bacilli</taxon>
        <taxon>Lactobacillales</taxon>
        <taxon>Streptococcaceae</taxon>
        <taxon>Lactococcus</taxon>
    </lineage>
</organism>
<keyword id="KW-0614">Plasmid</keyword>
<reference key="1">
    <citation type="journal article" date="1996" name="Appl. Environ. Microbiol.">
        <title>AbiG, a genotypically novel abortive infection mechanism encoded by plasmid pCI750 of Lactococcus lactis subsp. cremoris UC653.</title>
        <authorList>
            <person name="O'Connor L."/>
            <person name="Coffey A."/>
            <person name="Daly C."/>
            <person name="Fitzgerald G.F."/>
        </authorList>
    </citation>
    <scope>NUCLEOTIDE SEQUENCE [GENOMIC DNA]</scope>
    <source>
        <strain>UC653</strain>
    </source>
</reference>
<reference key="2">
    <citation type="journal article" date="1999" name="Appl. Environ. Microbiol.">
        <title>Expression, regulation, and mode of action of the AbiG abortive infection system of Lactococcus lactis subsp. cremoris UC653.</title>
        <authorList>
            <person name="O'Connor L."/>
            <person name="Tangney M."/>
            <person name="Fitzgerald G.F."/>
        </authorList>
    </citation>
    <scope>EFFECT ON PHAGES</scope>
    <source>
        <strain>UC653</strain>
    </source>
</reference>
<comment type="function">
    <text>Confers resistance to phages by a mechanism of abortive infection. Seems to act by interfering with phage RNA synthesis. Does not act at the level of phage DNA synthesis.</text>
</comment>
<feature type="chain" id="PRO_0000064425" description="Abortive phage resistance protein AbiGi">
    <location>
        <begin position="1"/>
        <end position="249"/>
    </location>
</feature>
<gene>
    <name type="primary">abiGI</name>
</gene>
<protein>
    <recommendedName>
        <fullName>Abortive phage resistance protein AbiGi</fullName>
    </recommendedName>
</protein>
<name>ABIG1_LACLC</name>
<proteinExistence type="predicted"/>
<geneLocation type="plasmid">
    <name>pCI750</name>
</geneLocation>